<keyword id="KW-0012">Acyltransferase</keyword>
<keyword id="KW-0256">Endoplasmic reticulum</keyword>
<keyword id="KW-0444">Lipid biosynthesis</keyword>
<keyword id="KW-0443">Lipid metabolism</keyword>
<keyword id="KW-0472">Membrane</keyword>
<keyword id="KW-0594">Phospholipid biosynthesis</keyword>
<keyword id="KW-1208">Phospholipid metabolism</keyword>
<keyword id="KW-1185">Reference proteome</keyword>
<keyword id="KW-0808">Transferase</keyword>
<keyword id="KW-0812">Transmembrane</keyword>
<keyword id="KW-1133">Transmembrane helix</keyword>
<sequence>MATSTTGSTLLQPLSNAVRLPVDQVNFVVCQLFALLAAIWFRTYLHSSKTSPFIRHVVATLLGLYLALFCFGWYALHFVIQSGISYYLMIIIGVENMHKYCFVFALGYLTVCQITRVYIFDYGQYSADFSGPMMIITQKITSLAFEIHDGMFRKNEDLTPSQRCLAVRRMPSLLEYLSYNCNFMGILAGPLCSYKDYITFIEGRSYQLQQSEANGKEDTKYEQTDPSPNIAVAQKLLICGLSLLFHMTITKTLPVEYNIDENFRATASWPVRVFYLYLSLMAARPKYYFAWTLADAINNAAGFGFRGYDKNGVTRWDLISNLRIQQIESSTSFKMFLDNWNIQTALWLKRVCYERATFSPTIQTFILSAIWHGVYPGYYLTFLTGVLMTLAARAIRNNIRHYFVESPAVKLCYDIITWMTTQVAISYTVVPFVLLSVKPSFTFYSSCYFCLHIASILVLLVFPLKRTQKGNKQHESIQPVWSKKLEEENLLQKNSYSTTNNSFSQKEEITCRYQALKQ</sequence>
<organism>
    <name type="scientific">Gallus gallus</name>
    <name type="common">Chicken</name>
    <dbReference type="NCBI Taxonomy" id="9031"/>
    <lineage>
        <taxon>Eukaryota</taxon>
        <taxon>Metazoa</taxon>
        <taxon>Chordata</taxon>
        <taxon>Craniata</taxon>
        <taxon>Vertebrata</taxon>
        <taxon>Euteleostomi</taxon>
        <taxon>Archelosauria</taxon>
        <taxon>Archosauria</taxon>
        <taxon>Dinosauria</taxon>
        <taxon>Saurischia</taxon>
        <taxon>Theropoda</taxon>
        <taxon>Coelurosauria</taxon>
        <taxon>Aves</taxon>
        <taxon>Neognathae</taxon>
        <taxon>Galloanserae</taxon>
        <taxon>Galliformes</taxon>
        <taxon>Phasianidae</taxon>
        <taxon>Phasianinae</taxon>
        <taxon>Gallus</taxon>
    </lineage>
</organism>
<gene>
    <name evidence="2" type="primary">mboat2</name>
    <name type="synonym">oact2</name>
    <name type="ORF">RCJMB04_10b24</name>
</gene>
<reference key="1">
    <citation type="journal article" date="2005" name="Genome Biol.">
        <title>Full-length cDNAs from chicken bursal lymphocytes to facilitate gene function analysis.</title>
        <authorList>
            <person name="Caldwell R.B."/>
            <person name="Kierzek A.M."/>
            <person name="Arakawa H."/>
            <person name="Bezzubov Y."/>
            <person name="Zaim J."/>
            <person name="Fiedler P."/>
            <person name="Kutter S."/>
            <person name="Blagodatski A."/>
            <person name="Kostovska D."/>
            <person name="Koter M."/>
            <person name="Plachy J."/>
            <person name="Carninci P."/>
            <person name="Hayashizaki Y."/>
            <person name="Buerstedde J.-M."/>
        </authorList>
    </citation>
    <scope>NUCLEOTIDE SEQUENCE [LARGE SCALE MRNA]</scope>
    <source>
        <strain>CB</strain>
        <tissue>Bursa of Fabricius</tissue>
    </source>
</reference>
<feature type="chain" id="PRO_0000273023" description="Membrane-bound glycerophospholipid O-acyltransferase 2">
    <location>
        <begin position="1"/>
        <end position="518"/>
    </location>
</feature>
<feature type="transmembrane region" description="Helical" evidence="4">
    <location>
        <begin position="21"/>
        <end position="41"/>
    </location>
</feature>
<feature type="transmembrane region" description="Helical" evidence="4">
    <location>
        <begin position="60"/>
        <end position="80"/>
    </location>
</feature>
<feature type="transmembrane region" description="Helical" evidence="4">
    <location>
        <begin position="87"/>
        <end position="107"/>
    </location>
</feature>
<feature type="transmembrane region" description="Helical" evidence="4">
    <location>
        <begin position="183"/>
        <end position="203"/>
    </location>
</feature>
<feature type="transmembrane region" description="Helical" evidence="4">
    <location>
        <begin position="230"/>
        <end position="250"/>
    </location>
</feature>
<feature type="transmembrane region" description="Helical" evidence="4">
    <location>
        <begin position="267"/>
        <end position="283"/>
    </location>
</feature>
<feature type="transmembrane region" description="Helical" evidence="4">
    <location>
        <begin position="365"/>
        <end position="385"/>
    </location>
</feature>
<feature type="transmembrane region" description="Helical" evidence="4">
    <location>
        <begin position="415"/>
        <end position="435"/>
    </location>
</feature>
<feature type="transmembrane region" description="Helical" evidence="4">
    <location>
        <begin position="443"/>
        <end position="463"/>
    </location>
</feature>
<feature type="active site" evidence="1">
    <location>
        <position position="341"/>
    </location>
</feature>
<feature type="active site" evidence="1">
    <location>
        <position position="372"/>
    </location>
</feature>
<name>MBOA2_CHICK</name>
<dbReference type="EC" id="2.3.1.-" evidence="2"/>
<dbReference type="EC" id="2.3.1.51" evidence="2"/>
<dbReference type="EC" id="2.3.1.23" evidence="2"/>
<dbReference type="EC" id="2.3.1.n7" evidence="2"/>
<dbReference type="EMBL" id="AJ720068">
    <property type="protein sequence ID" value="CAG31727.1"/>
    <property type="molecule type" value="mRNA"/>
</dbReference>
<dbReference type="RefSeq" id="NP_001026261.1">
    <property type="nucleotide sequence ID" value="NM_001031090.1"/>
</dbReference>
<dbReference type="SMR" id="Q5ZKL6"/>
<dbReference type="FunCoup" id="Q5ZKL6">
    <property type="interactions" value="1279"/>
</dbReference>
<dbReference type="STRING" id="9031.ENSGALP00000026423"/>
<dbReference type="PaxDb" id="9031-ENSGALP00000026423"/>
<dbReference type="GeneID" id="421925"/>
<dbReference type="KEGG" id="gga:421925"/>
<dbReference type="CTD" id="129642"/>
<dbReference type="VEuPathDB" id="HostDB:geneid_421925"/>
<dbReference type="eggNOG" id="KOG2704">
    <property type="taxonomic scope" value="Eukaryota"/>
</dbReference>
<dbReference type="HOGENOM" id="CLU_011340_3_0_1"/>
<dbReference type="InParanoid" id="Q5ZKL6"/>
<dbReference type="OMA" id="WHGTRPG"/>
<dbReference type="OrthoDB" id="286734at2759"/>
<dbReference type="PhylomeDB" id="Q5ZKL6"/>
<dbReference type="TreeFam" id="TF314906"/>
<dbReference type="Reactome" id="R-GGA-1482788">
    <property type="pathway name" value="Acyl chain remodelling of PC"/>
</dbReference>
<dbReference type="Reactome" id="R-GGA-1482839">
    <property type="pathway name" value="Acyl chain remodelling of PE"/>
</dbReference>
<dbReference type="UniPathway" id="UPA00085"/>
<dbReference type="PRO" id="PR:Q5ZKL6"/>
<dbReference type="Proteomes" id="UP000000539">
    <property type="component" value="Chromosome 3"/>
</dbReference>
<dbReference type="Bgee" id="ENSGALG00000016412">
    <property type="expression patterns" value="Expressed in cerebellum and 11 other cell types or tissues"/>
</dbReference>
<dbReference type="GO" id="GO:0005789">
    <property type="term" value="C:endoplasmic reticulum membrane"/>
    <property type="evidence" value="ECO:0000250"/>
    <property type="project" value="UniProtKB"/>
</dbReference>
<dbReference type="GO" id="GO:0016020">
    <property type="term" value="C:membrane"/>
    <property type="evidence" value="ECO:0000318"/>
    <property type="project" value="GO_Central"/>
</dbReference>
<dbReference type="GO" id="GO:0003841">
    <property type="term" value="F:1-acylglycerol-3-phosphate O-acyltransferase activity"/>
    <property type="evidence" value="ECO:0007669"/>
    <property type="project" value="UniProtKB-EC"/>
</dbReference>
<dbReference type="GO" id="GO:0047184">
    <property type="term" value="F:1-acylglycerophosphocholine O-acyltransferase activity"/>
    <property type="evidence" value="ECO:0000250"/>
    <property type="project" value="UniProtKB"/>
</dbReference>
<dbReference type="GO" id="GO:0106262">
    <property type="term" value="F:1-acylglycerophosphoethanolamine O-acyltransferase activity"/>
    <property type="evidence" value="ECO:0000250"/>
    <property type="project" value="UniProtKB"/>
</dbReference>
<dbReference type="GO" id="GO:0106263">
    <property type="term" value="F:1-acylglycerophosphoserine O-acyltransferase activity"/>
    <property type="evidence" value="ECO:0000250"/>
    <property type="project" value="UniProtKB"/>
</dbReference>
<dbReference type="GO" id="GO:0016746">
    <property type="term" value="F:acyltransferase activity"/>
    <property type="evidence" value="ECO:0000318"/>
    <property type="project" value="GO_Central"/>
</dbReference>
<dbReference type="GO" id="GO:0030258">
    <property type="term" value="P:lipid modification"/>
    <property type="evidence" value="ECO:0000318"/>
    <property type="project" value="GO_Central"/>
</dbReference>
<dbReference type="GO" id="GO:0036151">
    <property type="term" value="P:phosphatidylcholine acyl-chain remodeling"/>
    <property type="evidence" value="ECO:0000250"/>
    <property type="project" value="UniProtKB"/>
</dbReference>
<dbReference type="GO" id="GO:0036152">
    <property type="term" value="P:phosphatidylethanolamine acyl-chain remodeling"/>
    <property type="evidence" value="ECO:0000250"/>
    <property type="project" value="UniProtKB"/>
</dbReference>
<dbReference type="GO" id="GO:0036150">
    <property type="term" value="P:phosphatidylserine acyl-chain remodeling"/>
    <property type="evidence" value="ECO:0000250"/>
    <property type="project" value="UniProtKB"/>
</dbReference>
<dbReference type="GO" id="GO:0008654">
    <property type="term" value="P:phospholipid biosynthetic process"/>
    <property type="evidence" value="ECO:0007669"/>
    <property type="project" value="UniProtKB-KW"/>
</dbReference>
<dbReference type="GO" id="GO:0032330">
    <property type="term" value="P:regulation of chondrocyte differentiation"/>
    <property type="evidence" value="ECO:0000250"/>
    <property type="project" value="UniProtKB"/>
</dbReference>
<dbReference type="InterPro" id="IPR049941">
    <property type="entry name" value="LPLAT_7/PORCN-like"/>
</dbReference>
<dbReference type="InterPro" id="IPR004299">
    <property type="entry name" value="MBOAT_fam"/>
</dbReference>
<dbReference type="PANTHER" id="PTHR13906:SF7">
    <property type="entry name" value="LYSOPHOSPHOLIPID ACYLTRANSFERASE 2"/>
    <property type="match status" value="1"/>
</dbReference>
<dbReference type="PANTHER" id="PTHR13906">
    <property type="entry name" value="PORCUPINE"/>
    <property type="match status" value="1"/>
</dbReference>
<dbReference type="Pfam" id="PF03062">
    <property type="entry name" value="MBOAT"/>
    <property type="match status" value="1"/>
</dbReference>
<comment type="function">
    <text evidence="2">Acyltransferase which catalyzes the transfer of an acyl group from an acyl-CoA to a lysophospholipid leading to the production of a phospholipid and participates in the reacylation step of the phospholipid remodeling pathway also known as the Lands cycle. May catalyze preferentially the acylation of lysophosphatidylethanolamine (1-acyl-sn-glycero-3-phosphoethanolamine or LPE) and lysophosphatidic acid (LPA) and to a lesser extend lysophosphatidylcholine (LPC) and lysophosphatidylserine (LPS). Prefers oleoyl-CoA as the acyl donor.</text>
</comment>
<comment type="catalytic activity">
    <reaction evidence="2">
        <text>a 1-acyl-sn-glycero-3-phosphocholine + an acyl-CoA = a 1,2-diacyl-sn-glycero-3-phosphocholine + CoA</text>
        <dbReference type="Rhea" id="RHEA:12937"/>
        <dbReference type="ChEBI" id="CHEBI:57287"/>
        <dbReference type="ChEBI" id="CHEBI:57643"/>
        <dbReference type="ChEBI" id="CHEBI:58168"/>
        <dbReference type="ChEBI" id="CHEBI:58342"/>
        <dbReference type="EC" id="2.3.1.23"/>
    </reaction>
    <physiologicalReaction direction="left-to-right" evidence="2">
        <dbReference type="Rhea" id="RHEA:12938"/>
    </physiologicalReaction>
</comment>
<comment type="catalytic activity">
    <reaction evidence="2">
        <text>a 1-acyl-sn-glycero-3-phosphoethanolamine + an acyl-CoA = a 1,2-diacyl-sn-glycero-3-phosphoethanolamine + CoA</text>
        <dbReference type="Rhea" id="RHEA:32995"/>
        <dbReference type="ChEBI" id="CHEBI:57287"/>
        <dbReference type="ChEBI" id="CHEBI:58342"/>
        <dbReference type="ChEBI" id="CHEBI:64381"/>
        <dbReference type="ChEBI" id="CHEBI:64612"/>
        <dbReference type="EC" id="2.3.1.n7"/>
    </reaction>
    <physiologicalReaction direction="left-to-right" evidence="2">
        <dbReference type="Rhea" id="RHEA:32996"/>
    </physiologicalReaction>
</comment>
<comment type="catalytic activity">
    <reaction evidence="2">
        <text>a 1-acyl-sn-glycero-3-phosphate + an acyl-CoA = a 1,2-diacyl-sn-glycero-3-phosphate + CoA</text>
        <dbReference type="Rhea" id="RHEA:19709"/>
        <dbReference type="ChEBI" id="CHEBI:57287"/>
        <dbReference type="ChEBI" id="CHEBI:57970"/>
        <dbReference type="ChEBI" id="CHEBI:58342"/>
        <dbReference type="ChEBI" id="CHEBI:58608"/>
        <dbReference type="EC" id="2.3.1.51"/>
    </reaction>
    <physiologicalReaction direction="left-to-right" evidence="2">
        <dbReference type="Rhea" id="RHEA:19710"/>
    </physiologicalReaction>
</comment>
<comment type="catalytic activity">
    <reaction evidence="2">
        <text>(9Z)-hexadecenoyl-CoA + 1-hexadecanoyl-sn-glycero-3-phosphocholine = 1-hexadecanoyl-2-(9Z-hexadecenoyl)-sn-glycero-3-phosphocholine + CoA</text>
        <dbReference type="Rhea" id="RHEA:37207"/>
        <dbReference type="ChEBI" id="CHEBI:57287"/>
        <dbReference type="ChEBI" id="CHEBI:61540"/>
        <dbReference type="ChEBI" id="CHEBI:72998"/>
        <dbReference type="ChEBI" id="CHEBI:74000"/>
    </reaction>
    <physiologicalReaction direction="left-to-right" evidence="2">
        <dbReference type="Rhea" id="RHEA:37208"/>
    </physiologicalReaction>
</comment>
<comment type="catalytic activity">
    <reaction evidence="2">
        <text>1-hexadecanoyl-sn-glycero-3-phosphoethanolamine + (9Z)-octadecenoyl-CoA = 1-hexadecanoyl-2-(9Z-octadecenoyl)-sn-glycero-3-phosphoethanolamine + CoA</text>
        <dbReference type="Rhea" id="RHEA:36015"/>
        <dbReference type="ChEBI" id="CHEBI:57287"/>
        <dbReference type="ChEBI" id="CHEBI:57387"/>
        <dbReference type="ChEBI" id="CHEBI:73004"/>
        <dbReference type="ChEBI" id="CHEBI:73007"/>
    </reaction>
    <physiologicalReaction direction="left-to-right" evidence="2">
        <dbReference type="Rhea" id="RHEA:36016"/>
    </physiologicalReaction>
</comment>
<comment type="catalytic activity">
    <reaction evidence="2">
        <text>1-hexadecanoyl-sn-glycero-3-phosphoethanolamine + (9Z)-hexadecenoyl-CoA = 1-hexadecanoyl-2-(9Z)-hexadecenoyl-sn-glycero-3-phosphoethanolamine + CoA</text>
        <dbReference type="Rhea" id="RHEA:37419"/>
        <dbReference type="ChEBI" id="CHEBI:57287"/>
        <dbReference type="ChEBI" id="CHEBI:61540"/>
        <dbReference type="ChEBI" id="CHEBI:73004"/>
        <dbReference type="ChEBI" id="CHEBI:73999"/>
    </reaction>
    <physiologicalReaction direction="left-to-right" evidence="2">
        <dbReference type="Rhea" id="RHEA:37420"/>
    </physiologicalReaction>
</comment>
<comment type="catalytic activity">
    <reaction evidence="2">
        <text>1-(9Z-octadecenoyl)-sn-glycero-3-phospho-L-serine + hexadecanoyl-CoA = 1-(9Z)-octadecenoyl-2-hexadecanoyl-sn-glycero-3-phosphoserine + CoA</text>
        <dbReference type="Rhea" id="RHEA:37415"/>
        <dbReference type="ChEBI" id="CHEBI:57287"/>
        <dbReference type="ChEBI" id="CHEBI:57379"/>
        <dbReference type="ChEBI" id="CHEBI:74617"/>
        <dbReference type="ChEBI" id="CHEBI:74909"/>
    </reaction>
    <physiologicalReaction direction="left-to-right" evidence="2">
        <dbReference type="Rhea" id="RHEA:37416"/>
    </physiologicalReaction>
</comment>
<comment type="catalytic activity">
    <reaction evidence="2">
        <text>(9Z,12Z)-octadecadienoyl-CoA + 1-hexadecanoyl-sn-glycero-3-phosphocholine = 1-hexadecanoyl-2-(9Z,12Z-octadecadienoyl)-sn-glycero-3-phosphocholine + CoA</text>
        <dbReference type="Rhea" id="RHEA:35995"/>
        <dbReference type="ChEBI" id="CHEBI:57287"/>
        <dbReference type="ChEBI" id="CHEBI:57383"/>
        <dbReference type="ChEBI" id="CHEBI:72998"/>
        <dbReference type="ChEBI" id="CHEBI:73002"/>
    </reaction>
    <physiologicalReaction direction="left-to-right" evidence="2">
        <dbReference type="Rhea" id="RHEA:35996"/>
    </physiologicalReaction>
</comment>
<comment type="catalytic activity">
    <reaction evidence="2">
        <text>1-hexadecanoyl-sn-glycero-3-phosphocholine + (9Z)-octadecenoyl-CoA = 1-hexadecanoyl-2-(9Z-octadecenoyl)-sn-glycero-3-phosphocholine + CoA</text>
        <dbReference type="Rhea" id="RHEA:35991"/>
        <dbReference type="ChEBI" id="CHEBI:57287"/>
        <dbReference type="ChEBI" id="CHEBI:57387"/>
        <dbReference type="ChEBI" id="CHEBI:72998"/>
        <dbReference type="ChEBI" id="CHEBI:73001"/>
    </reaction>
    <physiologicalReaction direction="left-to-right" evidence="2">
        <dbReference type="Rhea" id="RHEA:35992"/>
    </physiologicalReaction>
</comment>
<comment type="catalytic activity">
    <reaction evidence="2">
        <text>1-hexadecanoyl-sn-glycero-3-phosphate + (9Z)-hexadecenoyl-CoA = 1-hexadecanoyl-2-[(9Z)-hexadec-9-enoyl]-sn-glycero-3-phosphate + CoA</text>
        <dbReference type="Rhea" id="RHEA:37223"/>
        <dbReference type="ChEBI" id="CHEBI:57287"/>
        <dbReference type="ChEBI" id="CHEBI:57518"/>
        <dbReference type="ChEBI" id="CHEBI:61540"/>
        <dbReference type="ChEBI" id="CHEBI:73998"/>
    </reaction>
    <physiologicalReaction direction="left-to-right" evidence="2">
        <dbReference type="Rhea" id="RHEA:37224"/>
    </physiologicalReaction>
</comment>
<comment type="catalytic activity">
    <reaction evidence="2">
        <text>1-hexadecanoyl-sn-glycero-3-phosphate + (9Z)-octadecenoyl-CoA = 1-hexadecanoyl-2-(9Z-octadecenoyl)-sn-glycero-3-phosphate + CoA</text>
        <dbReference type="Rhea" id="RHEA:33187"/>
        <dbReference type="ChEBI" id="CHEBI:57287"/>
        <dbReference type="ChEBI" id="CHEBI:57387"/>
        <dbReference type="ChEBI" id="CHEBI:57518"/>
        <dbReference type="ChEBI" id="CHEBI:64839"/>
    </reaction>
    <physiologicalReaction direction="left-to-right" evidence="2">
        <dbReference type="Rhea" id="RHEA:33188"/>
    </physiologicalReaction>
</comment>
<comment type="catalytic activity">
    <reaction evidence="3">
        <text>a 1-O-(1Z-alkenyl)-sn-glycero-3-phosphocholine + (9Z)-octadecenoyl-CoA = 1-O-(1Z)-alkenyl-2-(9Z)-octadecenoyl-sn-glycero-3-phosphocholine + CoA</text>
        <dbReference type="Rhea" id="RHEA:37627"/>
        <dbReference type="ChEBI" id="CHEBI:57287"/>
        <dbReference type="ChEBI" id="CHEBI:57387"/>
        <dbReference type="ChEBI" id="CHEBI:77287"/>
        <dbReference type="ChEBI" id="CHEBI:77294"/>
    </reaction>
    <physiologicalReaction direction="left-to-right" evidence="3">
        <dbReference type="Rhea" id="RHEA:37628"/>
    </physiologicalReaction>
</comment>
<comment type="catalytic activity">
    <reaction evidence="3">
        <text>a 1-O-(1Z-alkenyl)-sn-glycero-3-phosphoethanolamine + (9Z)-octadecenoyl-CoA = 1-O-(1Z)-alkenyl-2-(9Z)-octadecenoyl-sn-glycero-3-phosphoethanolamine + CoA</text>
        <dbReference type="Rhea" id="RHEA:37631"/>
        <dbReference type="ChEBI" id="CHEBI:57287"/>
        <dbReference type="ChEBI" id="CHEBI:57387"/>
        <dbReference type="ChEBI" id="CHEBI:77288"/>
        <dbReference type="ChEBI" id="CHEBI:77291"/>
    </reaction>
    <physiologicalReaction direction="left-to-right" evidence="3">
        <dbReference type="Rhea" id="RHEA:37632"/>
    </physiologicalReaction>
</comment>
<comment type="catalytic activity">
    <reaction evidence="3">
        <text>1-octadecanoyl-sn-glycero-3-phosphoethanolamine + (9Z)-octadecenoyl-CoA = 1-octadecanoyl-2-(9Z-octadecenoyl)-sn-glycero-3-phosphoethanolamine + CoA</text>
        <dbReference type="Rhea" id="RHEA:37523"/>
        <dbReference type="ChEBI" id="CHEBI:57287"/>
        <dbReference type="ChEBI" id="CHEBI:57387"/>
        <dbReference type="ChEBI" id="CHEBI:75036"/>
        <dbReference type="ChEBI" id="CHEBI:75038"/>
    </reaction>
    <physiologicalReaction direction="left-to-right" evidence="3">
        <dbReference type="Rhea" id="RHEA:37524"/>
    </physiologicalReaction>
</comment>
<comment type="catalytic activity">
    <reaction evidence="3">
        <text>1-octadecanoyl-sn-glycero-3-phosphocholine + (9Z)-octadecenoyl-CoA = 1-octadecanoyl-2-(9Z-octadecenoyl)-sn-glycero-3-phosphocholine + CoA</text>
        <dbReference type="Rhea" id="RHEA:37519"/>
        <dbReference type="ChEBI" id="CHEBI:57287"/>
        <dbReference type="ChEBI" id="CHEBI:57387"/>
        <dbReference type="ChEBI" id="CHEBI:73858"/>
        <dbReference type="ChEBI" id="CHEBI:75034"/>
    </reaction>
    <physiologicalReaction direction="left-to-right" evidence="3">
        <dbReference type="Rhea" id="RHEA:37520"/>
    </physiologicalReaction>
</comment>
<comment type="catalytic activity">
    <reaction evidence="3">
        <text>1-(9Z-octadecenoyl)-sn-glycero-3-phosphoethanolamine + (9Z)-octadecenoyl-CoA = 1,2-di-(9Z-octadecenoyl)-sn-glycero-3-phosphoethanolamine + CoA</text>
        <dbReference type="Rhea" id="RHEA:37499"/>
        <dbReference type="ChEBI" id="CHEBI:57287"/>
        <dbReference type="ChEBI" id="CHEBI:57387"/>
        <dbReference type="ChEBI" id="CHEBI:74971"/>
        <dbReference type="ChEBI" id="CHEBI:74986"/>
    </reaction>
    <physiologicalReaction direction="left-to-right" evidence="3">
        <dbReference type="Rhea" id="RHEA:37500"/>
    </physiologicalReaction>
</comment>
<comment type="pathway">
    <text evidence="2">Lipid metabolism; phospholipid metabolism.</text>
</comment>
<comment type="subcellular location">
    <subcellularLocation>
        <location evidence="3">Endoplasmic reticulum membrane</location>
        <topology evidence="4">Multi-pass membrane protein</topology>
    </subcellularLocation>
</comment>
<comment type="similarity">
    <text evidence="5">Belongs to the membrane-bound acyltransferase family.</text>
</comment>
<protein>
    <recommendedName>
        <fullName evidence="2">Membrane-bound glycerophospholipid O-acyltransferase 2</fullName>
        <ecNumber evidence="2">2.3.1.-</ecNumber>
    </recommendedName>
    <alternativeName>
        <fullName evidence="2">1-acylglycerophosphate O-acyltransferase</fullName>
        <ecNumber evidence="2">2.3.1.51</ecNumber>
    </alternativeName>
    <alternativeName>
        <fullName evidence="2">1-acylglycerophosphocholine O-acyltransferase</fullName>
        <ecNumber evidence="2">2.3.1.23</ecNumber>
    </alternativeName>
    <alternativeName>
        <fullName evidence="2">1-acylglycerophosphoethanolamine O-acyltransferase</fullName>
        <ecNumber evidence="2">2.3.1.n7</ecNumber>
    </alternativeName>
    <alternativeName>
        <fullName evidence="2">Lysophospholipid acyltransferase 2</fullName>
        <shortName>LPLAT 2</shortName>
    </alternativeName>
    <alternativeName>
        <fullName evidence="2">Membrane-bound O-acyltransferase domain-containing protein 2</fullName>
        <shortName>O-acyltransferase domain-containing protein 2</shortName>
    </alternativeName>
</protein>
<proteinExistence type="evidence at transcript level"/>
<evidence type="ECO:0000250" key="1"/>
<evidence type="ECO:0000250" key="2">
    <source>
        <dbReference type="UniProtKB" id="Q6ZWT7"/>
    </source>
</evidence>
<evidence type="ECO:0000250" key="3">
    <source>
        <dbReference type="UniProtKB" id="Q8R3I2"/>
    </source>
</evidence>
<evidence type="ECO:0000255" key="4"/>
<evidence type="ECO:0000305" key="5"/>
<accession>Q5ZKL6</accession>